<feature type="chain" id="PRO_1000123381" description="3-methyl-2-oxobutanoate hydroxymethyltransferase">
    <location>
        <begin position="1"/>
        <end position="264"/>
    </location>
</feature>
<feature type="active site" description="Proton acceptor" evidence="1">
    <location>
        <position position="181"/>
    </location>
</feature>
<feature type="binding site" evidence="1">
    <location>
        <begin position="45"/>
        <end position="46"/>
    </location>
    <ligand>
        <name>3-methyl-2-oxobutanoate</name>
        <dbReference type="ChEBI" id="CHEBI:11851"/>
    </ligand>
</feature>
<feature type="binding site" evidence="1">
    <location>
        <position position="45"/>
    </location>
    <ligand>
        <name>Mg(2+)</name>
        <dbReference type="ChEBI" id="CHEBI:18420"/>
    </ligand>
</feature>
<feature type="binding site" evidence="1">
    <location>
        <position position="84"/>
    </location>
    <ligand>
        <name>3-methyl-2-oxobutanoate</name>
        <dbReference type="ChEBI" id="CHEBI:11851"/>
    </ligand>
</feature>
<feature type="binding site" evidence="1">
    <location>
        <position position="84"/>
    </location>
    <ligand>
        <name>Mg(2+)</name>
        <dbReference type="ChEBI" id="CHEBI:18420"/>
    </ligand>
</feature>
<feature type="binding site" evidence="1">
    <location>
        <position position="112"/>
    </location>
    <ligand>
        <name>3-methyl-2-oxobutanoate</name>
        <dbReference type="ChEBI" id="CHEBI:11851"/>
    </ligand>
</feature>
<feature type="binding site" evidence="1">
    <location>
        <position position="114"/>
    </location>
    <ligand>
        <name>Mg(2+)</name>
        <dbReference type="ChEBI" id="CHEBI:18420"/>
    </ligand>
</feature>
<gene>
    <name evidence="1" type="primary">panB</name>
    <name type="ordered locus">EC55989_0128</name>
</gene>
<reference key="1">
    <citation type="journal article" date="2009" name="PLoS Genet.">
        <title>Organised genome dynamics in the Escherichia coli species results in highly diverse adaptive paths.</title>
        <authorList>
            <person name="Touchon M."/>
            <person name="Hoede C."/>
            <person name="Tenaillon O."/>
            <person name="Barbe V."/>
            <person name="Baeriswyl S."/>
            <person name="Bidet P."/>
            <person name="Bingen E."/>
            <person name="Bonacorsi S."/>
            <person name="Bouchier C."/>
            <person name="Bouvet O."/>
            <person name="Calteau A."/>
            <person name="Chiapello H."/>
            <person name="Clermont O."/>
            <person name="Cruveiller S."/>
            <person name="Danchin A."/>
            <person name="Diard M."/>
            <person name="Dossat C."/>
            <person name="Karoui M.E."/>
            <person name="Frapy E."/>
            <person name="Garry L."/>
            <person name="Ghigo J.M."/>
            <person name="Gilles A.M."/>
            <person name="Johnson J."/>
            <person name="Le Bouguenec C."/>
            <person name="Lescat M."/>
            <person name="Mangenot S."/>
            <person name="Martinez-Jehanne V."/>
            <person name="Matic I."/>
            <person name="Nassif X."/>
            <person name="Oztas S."/>
            <person name="Petit M.A."/>
            <person name="Pichon C."/>
            <person name="Rouy Z."/>
            <person name="Ruf C.S."/>
            <person name="Schneider D."/>
            <person name="Tourret J."/>
            <person name="Vacherie B."/>
            <person name="Vallenet D."/>
            <person name="Medigue C."/>
            <person name="Rocha E.P.C."/>
            <person name="Denamur E."/>
        </authorList>
    </citation>
    <scope>NUCLEOTIDE SEQUENCE [LARGE SCALE GENOMIC DNA]</scope>
    <source>
        <strain>55989 / EAEC</strain>
    </source>
</reference>
<dbReference type="EC" id="2.1.2.11" evidence="1"/>
<dbReference type="EMBL" id="CU928145">
    <property type="protein sequence ID" value="CAU96015.1"/>
    <property type="molecule type" value="Genomic_DNA"/>
</dbReference>
<dbReference type="RefSeq" id="WP_000805455.1">
    <property type="nucleotide sequence ID" value="NC_011748.1"/>
</dbReference>
<dbReference type="SMR" id="B7LGJ6"/>
<dbReference type="KEGG" id="eck:EC55989_0128"/>
<dbReference type="HOGENOM" id="CLU_036645_1_0_6"/>
<dbReference type="UniPathway" id="UPA00028">
    <property type="reaction ID" value="UER00003"/>
</dbReference>
<dbReference type="Proteomes" id="UP000000746">
    <property type="component" value="Chromosome"/>
</dbReference>
<dbReference type="GO" id="GO:0005737">
    <property type="term" value="C:cytoplasm"/>
    <property type="evidence" value="ECO:0007669"/>
    <property type="project" value="UniProtKB-SubCell"/>
</dbReference>
<dbReference type="GO" id="GO:0003864">
    <property type="term" value="F:3-methyl-2-oxobutanoate hydroxymethyltransferase activity"/>
    <property type="evidence" value="ECO:0007669"/>
    <property type="project" value="UniProtKB-UniRule"/>
</dbReference>
<dbReference type="GO" id="GO:0000287">
    <property type="term" value="F:magnesium ion binding"/>
    <property type="evidence" value="ECO:0007669"/>
    <property type="project" value="TreeGrafter"/>
</dbReference>
<dbReference type="GO" id="GO:0015940">
    <property type="term" value="P:pantothenate biosynthetic process"/>
    <property type="evidence" value="ECO:0007669"/>
    <property type="project" value="UniProtKB-UniRule"/>
</dbReference>
<dbReference type="CDD" id="cd06557">
    <property type="entry name" value="KPHMT-like"/>
    <property type="match status" value="1"/>
</dbReference>
<dbReference type="FunFam" id="3.20.20.60:FF:000003">
    <property type="entry name" value="3-methyl-2-oxobutanoate hydroxymethyltransferase"/>
    <property type="match status" value="1"/>
</dbReference>
<dbReference type="Gene3D" id="3.20.20.60">
    <property type="entry name" value="Phosphoenolpyruvate-binding domains"/>
    <property type="match status" value="1"/>
</dbReference>
<dbReference type="HAMAP" id="MF_00156">
    <property type="entry name" value="PanB"/>
    <property type="match status" value="1"/>
</dbReference>
<dbReference type="InterPro" id="IPR003700">
    <property type="entry name" value="Pantoate_hydroxy_MeTrfase"/>
</dbReference>
<dbReference type="InterPro" id="IPR015813">
    <property type="entry name" value="Pyrv/PenolPyrv_kinase-like_dom"/>
</dbReference>
<dbReference type="InterPro" id="IPR040442">
    <property type="entry name" value="Pyrv_kinase-like_dom_sf"/>
</dbReference>
<dbReference type="NCBIfam" id="TIGR00222">
    <property type="entry name" value="panB"/>
    <property type="match status" value="1"/>
</dbReference>
<dbReference type="NCBIfam" id="NF001452">
    <property type="entry name" value="PRK00311.1"/>
    <property type="match status" value="1"/>
</dbReference>
<dbReference type="PANTHER" id="PTHR20881">
    <property type="entry name" value="3-METHYL-2-OXOBUTANOATE HYDROXYMETHYLTRANSFERASE"/>
    <property type="match status" value="1"/>
</dbReference>
<dbReference type="PANTHER" id="PTHR20881:SF0">
    <property type="entry name" value="3-METHYL-2-OXOBUTANOATE HYDROXYMETHYLTRANSFERASE"/>
    <property type="match status" value="1"/>
</dbReference>
<dbReference type="Pfam" id="PF02548">
    <property type="entry name" value="Pantoate_transf"/>
    <property type="match status" value="1"/>
</dbReference>
<dbReference type="PIRSF" id="PIRSF000388">
    <property type="entry name" value="Pantoate_hydroxy_MeTrfase"/>
    <property type="match status" value="1"/>
</dbReference>
<dbReference type="SUPFAM" id="SSF51621">
    <property type="entry name" value="Phosphoenolpyruvate/pyruvate domain"/>
    <property type="match status" value="1"/>
</dbReference>
<organism>
    <name type="scientific">Escherichia coli (strain 55989 / EAEC)</name>
    <dbReference type="NCBI Taxonomy" id="585055"/>
    <lineage>
        <taxon>Bacteria</taxon>
        <taxon>Pseudomonadati</taxon>
        <taxon>Pseudomonadota</taxon>
        <taxon>Gammaproteobacteria</taxon>
        <taxon>Enterobacterales</taxon>
        <taxon>Enterobacteriaceae</taxon>
        <taxon>Escherichia</taxon>
    </lineage>
</organism>
<comment type="function">
    <text evidence="1">Catalyzes the reversible reaction in which hydroxymethyl group from 5,10-methylenetetrahydrofolate is transferred onto alpha-ketoisovalerate to form ketopantoate.</text>
</comment>
<comment type="catalytic activity">
    <reaction evidence="1">
        <text>3-methyl-2-oxobutanoate + (6R)-5,10-methylene-5,6,7,8-tetrahydrofolate + H2O = 2-dehydropantoate + (6S)-5,6,7,8-tetrahydrofolate</text>
        <dbReference type="Rhea" id="RHEA:11824"/>
        <dbReference type="ChEBI" id="CHEBI:11561"/>
        <dbReference type="ChEBI" id="CHEBI:11851"/>
        <dbReference type="ChEBI" id="CHEBI:15377"/>
        <dbReference type="ChEBI" id="CHEBI:15636"/>
        <dbReference type="ChEBI" id="CHEBI:57453"/>
        <dbReference type="EC" id="2.1.2.11"/>
    </reaction>
</comment>
<comment type="cofactor">
    <cofactor evidence="1">
        <name>Mg(2+)</name>
        <dbReference type="ChEBI" id="CHEBI:18420"/>
    </cofactor>
    <text evidence="1">Binds 1 Mg(2+) ion per subunit.</text>
</comment>
<comment type="pathway">
    <text evidence="1">Cofactor biosynthesis; (R)-pantothenate biosynthesis; (R)-pantoate from 3-methyl-2-oxobutanoate: step 1/2.</text>
</comment>
<comment type="subunit">
    <text evidence="1">Homodecamer; pentamer of dimers.</text>
</comment>
<comment type="subcellular location">
    <subcellularLocation>
        <location evidence="1">Cytoplasm</location>
    </subcellularLocation>
</comment>
<comment type="similarity">
    <text evidence="1">Belongs to the PanB family.</text>
</comment>
<name>PANB_ECO55</name>
<protein>
    <recommendedName>
        <fullName evidence="1">3-methyl-2-oxobutanoate hydroxymethyltransferase</fullName>
        <ecNumber evidence="1">2.1.2.11</ecNumber>
    </recommendedName>
    <alternativeName>
        <fullName evidence="1">Ketopantoate hydroxymethyltransferase</fullName>
        <shortName evidence="1">KPHMT</shortName>
    </alternativeName>
</protein>
<keyword id="KW-0963">Cytoplasm</keyword>
<keyword id="KW-0460">Magnesium</keyword>
<keyword id="KW-0479">Metal-binding</keyword>
<keyword id="KW-0566">Pantothenate biosynthesis</keyword>
<keyword id="KW-1185">Reference proteome</keyword>
<keyword id="KW-0808">Transferase</keyword>
<sequence>MKPTTIASLQKCKQDKKRFATITAYDYSFAKLFADEGLNVMLVGDSLGMTVQGHDSTLPVTVEDIAYHTAAVRRGAPNCLLLADLPFMAYATPEQAFENAATVMRAGANMVKIEGGEWLVETVKMLTERAVPVCGHLGLTPQSVNIFGGYKVQGRGDEAGDQLLSDALALEAAGAQLLVLECVPVELAKRITEALAIPVIGIGAGNVTDGQILVMHDAFGITGGHIPKFAKNFLAETGDIRAAVRQYMAEVESGVYPGEEHSFH</sequence>
<accession>B7LGJ6</accession>
<proteinExistence type="inferred from homology"/>
<evidence type="ECO:0000255" key="1">
    <source>
        <dbReference type="HAMAP-Rule" id="MF_00156"/>
    </source>
</evidence>